<gene>
    <name type="ordered locus">Sbal195_3851</name>
</gene>
<evidence type="ECO:0000255" key="1">
    <source>
        <dbReference type="HAMAP-Rule" id="MF_00143"/>
    </source>
</evidence>
<name>Y3851_SHEB9</name>
<sequence>MEQIFEKLMYASRWIMAPIYLGLSLVLIGLGIKFFQEIFHILPIIFEITEVDLVLVTLSLIDITLVGGLIVMVMFSGYENFVSQLDVGEDSEKLSWLGKLDSGSLKNKVAASIVAISSIHLLKIFMDVKNIDNDKIMWYLLIHITFVLSAFAMGYLDKMTRAGK</sequence>
<protein>
    <recommendedName>
        <fullName evidence="1">UPF0114 protein Sbal195_3851</fullName>
    </recommendedName>
</protein>
<reference key="1">
    <citation type="submission" date="2007-11" db="EMBL/GenBank/DDBJ databases">
        <title>Complete sequence of chromosome of Shewanella baltica OS195.</title>
        <authorList>
            <consortium name="US DOE Joint Genome Institute"/>
            <person name="Copeland A."/>
            <person name="Lucas S."/>
            <person name="Lapidus A."/>
            <person name="Barry K."/>
            <person name="Glavina del Rio T."/>
            <person name="Dalin E."/>
            <person name="Tice H."/>
            <person name="Pitluck S."/>
            <person name="Chain P."/>
            <person name="Malfatti S."/>
            <person name="Shin M."/>
            <person name="Vergez L."/>
            <person name="Schmutz J."/>
            <person name="Larimer F."/>
            <person name="Land M."/>
            <person name="Hauser L."/>
            <person name="Kyrpides N."/>
            <person name="Kim E."/>
            <person name="Brettar I."/>
            <person name="Rodrigues J."/>
            <person name="Konstantinidis K."/>
            <person name="Klappenbach J."/>
            <person name="Hofle M."/>
            <person name="Tiedje J."/>
            <person name="Richardson P."/>
        </authorList>
    </citation>
    <scope>NUCLEOTIDE SEQUENCE [LARGE SCALE GENOMIC DNA]</scope>
    <source>
        <strain>OS195</strain>
    </source>
</reference>
<accession>A9L382</accession>
<proteinExistence type="inferred from homology"/>
<feature type="chain" id="PRO_1000076555" description="UPF0114 protein Sbal195_3851">
    <location>
        <begin position="1"/>
        <end position="164"/>
    </location>
</feature>
<feature type="transmembrane region" description="Helical" evidence="1">
    <location>
        <begin position="15"/>
        <end position="35"/>
    </location>
</feature>
<feature type="transmembrane region" description="Helical" evidence="1">
    <location>
        <begin position="53"/>
        <end position="73"/>
    </location>
</feature>
<feature type="transmembrane region" description="Helical" evidence="1">
    <location>
        <begin position="108"/>
        <end position="128"/>
    </location>
</feature>
<feature type="transmembrane region" description="Helical" evidence="1">
    <location>
        <begin position="136"/>
        <end position="156"/>
    </location>
</feature>
<comment type="subcellular location">
    <subcellularLocation>
        <location evidence="1">Cell membrane</location>
        <topology evidence="1">Multi-pass membrane protein</topology>
    </subcellularLocation>
</comment>
<comment type="similarity">
    <text evidence="1">Belongs to the UPF0114 family.</text>
</comment>
<keyword id="KW-1003">Cell membrane</keyword>
<keyword id="KW-0472">Membrane</keyword>
<keyword id="KW-0812">Transmembrane</keyword>
<keyword id="KW-1133">Transmembrane helix</keyword>
<organism>
    <name type="scientific">Shewanella baltica (strain OS195)</name>
    <dbReference type="NCBI Taxonomy" id="399599"/>
    <lineage>
        <taxon>Bacteria</taxon>
        <taxon>Pseudomonadati</taxon>
        <taxon>Pseudomonadota</taxon>
        <taxon>Gammaproteobacteria</taxon>
        <taxon>Alteromonadales</taxon>
        <taxon>Shewanellaceae</taxon>
        <taxon>Shewanella</taxon>
    </lineage>
</organism>
<dbReference type="EMBL" id="CP000891">
    <property type="protein sequence ID" value="ABX51011.1"/>
    <property type="molecule type" value="Genomic_DNA"/>
</dbReference>
<dbReference type="RefSeq" id="WP_006084177.1">
    <property type="nucleotide sequence ID" value="NC_009997.1"/>
</dbReference>
<dbReference type="KEGG" id="sbn:Sbal195_3851"/>
<dbReference type="HOGENOM" id="CLU_097887_1_0_6"/>
<dbReference type="Proteomes" id="UP000000770">
    <property type="component" value="Chromosome"/>
</dbReference>
<dbReference type="GO" id="GO:0005886">
    <property type="term" value="C:plasma membrane"/>
    <property type="evidence" value="ECO:0007669"/>
    <property type="project" value="UniProtKB-SubCell"/>
</dbReference>
<dbReference type="HAMAP" id="MF_00143">
    <property type="entry name" value="UPF0114"/>
    <property type="match status" value="1"/>
</dbReference>
<dbReference type="InterPro" id="IPR005134">
    <property type="entry name" value="UPF0114"/>
</dbReference>
<dbReference type="InterPro" id="IPR020761">
    <property type="entry name" value="UPF0114_bac"/>
</dbReference>
<dbReference type="NCBIfam" id="TIGR00645">
    <property type="entry name" value="HI0507"/>
    <property type="match status" value="1"/>
</dbReference>
<dbReference type="PANTHER" id="PTHR38596">
    <property type="entry name" value="UPF0114 PROTEIN YQHA"/>
    <property type="match status" value="1"/>
</dbReference>
<dbReference type="PANTHER" id="PTHR38596:SF1">
    <property type="entry name" value="UPF0114 PROTEIN YQHA"/>
    <property type="match status" value="1"/>
</dbReference>
<dbReference type="Pfam" id="PF03350">
    <property type="entry name" value="UPF0114"/>
    <property type="match status" value="1"/>
</dbReference>